<proteinExistence type="inferred from homology"/>
<gene>
    <name evidence="1" type="primary">tyrS</name>
    <name type="ordered locus">STK_20740</name>
</gene>
<accession>Q96YV3</accession>
<accession>F9VP79</accession>
<organism>
    <name type="scientific">Sulfurisphaera tokodaii (strain DSM 16993 / JCM 10545 / NBRC 100140 / 7)</name>
    <name type="common">Sulfolobus tokodaii</name>
    <dbReference type="NCBI Taxonomy" id="273063"/>
    <lineage>
        <taxon>Archaea</taxon>
        <taxon>Thermoproteota</taxon>
        <taxon>Thermoprotei</taxon>
        <taxon>Sulfolobales</taxon>
        <taxon>Sulfolobaceae</taxon>
        <taxon>Sulfurisphaera</taxon>
    </lineage>
</organism>
<dbReference type="EC" id="6.1.1.1" evidence="1"/>
<dbReference type="EMBL" id="BA000023">
    <property type="protein sequence ID" value="BAK54726.1"/>
    <property type="molecule type" value="Genomic_DNA"/>
</dbReference>
<dbReference type="SMR" id="Q96YV3"/>
<dbReference type="STRING" id="273063.STK_20740"/>
<dbReference type="KEGG" id="sto:STK_20740"/>
<dbReference type="PATRIC" id="fig|273063.9.peg.2362"/>
<dbReference type="eggNOG" id="arCOG01886">
    <property type="taxonomic scope" value="Archaea"/>
</dbReference>
<dbReference type="Proteomes" id="UP000001015">
    <property type="component" value="Chromosome"/>
</dbReference>
<dbReference type="GO" id="GO:0005737">
    <property type="term" value="C:cytoplasm"/>
    <property type="evidence" value="ECO:0007669"/>
    <property type="project" value="UniProtKB-SubCell"/>
</dbReference>
<dbReference type="GO" id="GO:0005524">
    <property type="term" value="F:ATP binding"/>
    <property type="evidence" value="ECO:0007669"/>
    <property type="project" value="UniProtKB-UniRule"/>
</dbReference>
<dbReference type="GO" id="GO:0004831">
    <property type="term" value="F:tyrosine-tRNA ligase activity"/>
    <property type="evidence" value="ECO:0007669"/>
    <property type="project" value="UniProtKB-UniRule"/>
</dbReference>
<dbReference type="GO" id="GO:0006437">
    <property type="term" value="P:tyrosyl-tRNA aminoacylation"/>
    <property type="evidence" value="ECO:0007669"/>
    <property type="project" value="UniProtKB-UniRule"/>
</dbReference>
<dbReference type="Gene3D" id="3.40.50.620">
    <property type="entry name" value="HUPs"/>
    <property type="match status" value="1"/>
</dbReference>
<dbReference type="Gene3D" id="1.10.240.10">
    <property type="entry name" value="Tyrosyl-Transfer RNA Synthetase"/>
    <property type="match status" value="1"/>
</dbReference>
<dbReference type="HAMAP" id="MF_02009">
    <property type="entry name" value="Tyr_tRNA_synth_type4"/>
    <property type="match status" value="1"/>
</dbReference>
<dbReference type="InterPro" id="IPR002305">
    <property type="entry name" value="aa-tRNA-synth_Ic"/>
</dbReference>
<dbReference type="InterPro" id="IPR014729">
    <property type="entry name" value="Rossmann-like_a/b/a_fold"/>
</dbReference>
<dbReference type="InterPro" id="IPR002307">
    <property type="entry name" value="Tyr-tRNA-ligase"/>
</dbReference>
<dbReference type="InterPro" id="IPR023678">
    <property type="entry name" value="Tyr-tRNA-ligase_4"/>
</dbReference>
<dbReference type="InterPro" id="IPR023617">
    <property type="entry name" value="Tyr-tRNA-ligase_arc/euk-type"/>
</dbReference>
<dbReference type="InterPro" id="IPR050489">
    <property type="entry name" value="Tyr-tRNA_synthase"/>
</dbReference>
<dbReference type="NCBIfam" id="NF006330">
    <property type="entry name" value="PRK08560.1"/>
    <property type="match status" value="1"/>
</dbReference>
<dbReference type="NCBIfam" id="TIGR00234">
    <property type="entry name" value="tyrS"/>
    <property type="match status" value="1"/>
</dbReference>
<dbReference type="PANTHER" id="PTHR46264:SF4">
    <property type="entry name" value="TYROSINE--TRNA LIGASE, CYTOPLASMIC"/>
    <property type="match status" value="1"/>
</dbReference>
<dbReference type="PANTHER" id="PTHR46264">
    <property type="entry name" value="TYROSINE-TRNA LIGASE"/>
    <property type="match status" value="1"/>
</dbReference>
<dbReference type="Pfam" id="PF00579">
    <property type="entry name" value="tRNA-synt_1b"/>
    <property type="match status" value="2"/>
</dbReference>
<dbReference type="PIRSF" id="PIRSF006588">
    <property type="entry name" value="TyrRS_arch_euk"/>
    <property type="match status" value="1"/>
</dbReference>
<dbReference type="PRINTS" id="PR01040">
    <property type="entry name" value="TRNASYNTHTYR"/>
</dbReference>
<dbReference type="SUPFAM" id="SSF52374">
    <property type="entry name" value="Nucleotidylyl transferase"/>
    <property type="match status" value="1"/>
</dbReference>
<name>SYY_SULTO</name>
<feature type="chain" id="PRO_0000240272" description="Tyrosine--tRNA ligase">
    <location>
        <begin position="1"/>
        <end position="364"/>
    </location>
</feature>
<feature type="short sequence motif" description="'KMSKS' region">
    <location>
        <begin position="238"/>
        <end position="242"/>
    </location>
</feature>
<feature type="binding site" evidence="1">
    <location>
        <position position="41"/>
    </location>
    <ligand>
        <name>L-tyrosine</name>
        <dbReference type="ChEBI" id="CHEBI:58315"/>
    </ligand>
</feature>
<feature type="binding site" evidence="1">
    <location>
        <position position="167"/>
    </location>
    <ligand>
        <name>L-tyrosine</name>
        <dbReference type="ChEBI" id="CHEBI:58315"/>
    </ligand>
</feature>
<feature type="binding site" evidence="1">
    <location>
        <position position="171"/>
    </location>
    <ligand>
        <name>L-tyrosine</name>
        <dbReference type="ChEBI" id="CHEBI:58315"/>
    </ligand>
</feature>
<feature type="binding site" evidence="1">
    <location>
        <position position="174"/>
    </location>
    <ligand>
        <name>L-tyrosine</name>
        <dbReference type="ChEBI" id="CHEBI:58315"/>
    </ligand>
</feature>
<feature type="binding site" evidence="1">
    <location>
        <position position="189"/>
    </location>
    <ligand>
        <name>L-tyrosine</name>
        <dbReference type="ChEBI" id="CHEBI:58315"/>
    </ligand>
</feature>
<feature type="binding site" evidence="1">
    <location>
        <position position="241"/>
    </location>
    <ligand>
        <name>ATP</name>
        <dbReference type="ChEBI" id="CHEBI:30616"/>
    </ligand>
</feature>
<keyword id="KW-0030">Aminoacyl-tRNA synthetase</keyword>
<keyword id="KW-0067">ATP-binding</keyword>
<keyword id="KW-0963">Cytoplasm</keyword>
<keyword id="KW-0436">Ligase</keyword>
<keyword id="KW-0547">Nucleotide-binding</keyword>
<keyword id="KW-0648">Protein biosynthesis</keyword>
<keyword id="KW-1185">Reference proteome</keyword>
<reference key="1">
    <citation type="journal article" date="2001" name="DNA Res.">
        <title>Complete genome sequence of an aerobic thermoacidophilic Crenarchaeon, Sulfolobus tokodaii strain7.</title>
        <authorList>
            <person name="Kawarabayasi Y."/>
            <person name="Hino Y."/>
            <person name="Horikawa H."/>
            <person name="Jin-no K."/>
            <person name="Takahashi M."/>
            <person name="Sekine M."/>
            <person name="Baba S."/>
            <person name="Ankai A."/>
            <person name="Kosugi H."/>
            <person name="Hosoyama A."/>
            <person name="Fukui S."/>
            <person name="Nagai Y."/>
            <person name="Nishijima K."/>
            <person name="Otsuka R."/>
            <person name="Nakazawa H."/>
            <person name="Takamiya M."/>
            <person name="Kato Y."/>
            <person name="Yoshizawa T."/>
            <person name="Tanaka T."/>
            <person name="Kudoh Y."/>
            <person name="Yamazaki J."/>
            <person name="Kushida N."/>
            <person name="Oguchi A."/>
            <person name="Aoki K."/>
            <person name="Masuda S."/>
            <person name="Yanagii M."/>
            <person name="Nishimura M."/>
            <person name="Yamagishi A."/>
            <person name="Oshima T."/>
            <person name="Kikuchi H."/>
        </authorList>
    </citation>
    <scope>NUCLEOTIDE SEQUENCE [LARGE SCALE GENOMIC DNA]</scope>
    <source>
        <strain>DSM 16993 / JCM 10545 / NBRC 100140 / 7</strain>
    </source>
</reference>
<evidence type="ECO:0000255" key="1">
    <source>
        <dbReference type="HAMAP-Rule" id="MF_02009"/>
    </source>
</evidence>
<protein>
    <recommendedName>
        <fullName evidence="1">Tyrosine--tRNA ligase</fullName>
        <ecNumber evidence="1">6.1.1.1</ecNumber>
    </recommendedName>
    <alternativeName>
        <fullName evidence="1">Tyrosyl-tRNA synthetase</fullName>
        <shortName evidence="1">TyrRS</shortName>
    </alternativeName>
</protein>
<sequence length="364" mass="41049">MGILTLNVEEKIKIISKNTAEIVTIDELRKKLEENQKLKGYIGFEPSGLFHIGWLIWAQKLKDLVDVGVDMSILVATWHAWINDKLGGNLDKIKLAGQYAIEVLNAYGVDMSKVRIVYAEDLVKDSNYWALVIRIAKNTSLARMKRALTIMGRKAEEAELDTSKLIYPAMQVADILYQDLDIALGGTDQRKAHMLARDVSDKLGKKKVIAIHTPLLIGLQGGQRMEGVEEDDYLASVKMSKSKPETAIFVHDPPEVVEAKLRSAYCPKGVVIDNPVLQINKYIIFAKDNATLKVERDIKYGGDIEFKSYEELEKIYSEGKLHPLDLKLATARKLNEILDPIRKKLESKTEFTLLVEELEKGVTR</sequence>
<comment type="function">
    <text evidence="1">Catalyzes the attachment of tyrosine to tRNA(Tyr) in a two-step reaction: tyrosine is first activated by ATP to form Tyr-AMP and then transferred to the acceptor end of tRNA(Tyr).</text>
</comment>
<comment type="catalytic activity">
    <reaction evidence="1">
        <text>tRNA(Tyr) + L-tyrosine + ATP = L-tyrosyl-tRNA(Tyr) + AMP + diphosphate + H(+)</text>
        <dbReference type="Rhea" id="RHEA:10220"/>
        <dbReference type="Rhea" id="RHEA-COMP:9706"/>
        <dbReference type="Rhea" id="RHEA-COMP:9707"/>
        <dbReference type="ChEBI" id="CHEBI:15378"/>
        <dbReference type="ChEBI" id="CHEBI:30616"/>
        <dbReference type="ChEBI" id="CHEBI:33019"/>
        <dbReference type="ChEBI" id="CHEBI:58315"/>
        <dbReference type="ChEBI" id="CHEBI:78442"/>
        <dbReference type="ChEBI" id="CHEBI:78536"/>
        <dbReference type="ChEBI" id="CHEBI:456215"/>
        <dbReference type="EC" id="6.1.1.1"/>
    </reaction>
</comment>
<comment type="subunit">
    <text evidence="1">Homodimer.</text>
</comment>
<comment type="subcellular location">
    <subcellularLocation>
        <location evidence="1">Cytoplasm</location>
    </subcellularLocation>
</comment>
<comment type="similarity">
    <text evidence="1">Belongs to the class-I aminoacyl-tRNA synthetase family. TyrS type 4 subfamily.</text>
</comment>